<organism>
    <name type="scientific">Acholeplasma laidlawii (strain PG-8A)</name>
    <dbReference type="NCBI Taxonomy" id="441768"/>
    <lineage>
        <taxon>Bacteria</taxon>
        <taxon>Bacillati</taxon>
        <taxon>Mycoplasmatota</taxon>
        <taxon>Mollicutes</taxon>
        <taxon>Acholeplasmatales</taxon>
        <taxon>Acholeplasmataceae</taxon>
        <taxon>Acholeplasma</taxon>
    </lineage>
</organism>
<accession>A9NEE9</accession>
<sequence length="116" mass="12780">MINKKSSNETRQKRHLRIRKHVIGTPDRPRLNVFRSNTAIYVQIINDETHNTLTSANTKELKVGANIEGAAALGKAVAEQALKLGITKVVFDRGGYLYHGRIKALADAARAAGLEF</sequence>
<dbReference type="EMBL" id="CP000896">
    <property type="protein sequence ID" value="ABX80729.1"/>
    <property type="molecule type" value="Genomic_DNA"/>
</dbReference>
<dbReference type="RefSeq" id="WP_012242060.1">
    <property type="nucleotide sequence ID" value="NC_010163.1"/>
</dbReference>
<dbReference type="SMR" id="A9NEE9"/>
<dbReference type="STRING" id="441768.ACL_0103"/>
<dbReference type="GeneID" id="41338305"/>
<dbReference type="KEGG" id="acl:ACL_0103"/>
<dbReference type="eggNOG" id="COG0256">
    <property type="taxonomic scope" value="Bacteria"/>
</dbReference>
<dbReference type="HOGENOM" id="CLU_098841_0_1_14"/>
<dbReference type="OrthoDB" id="9810939at2"/>
<dbReference type="Proteomes" id="UP000008558">
    <property type="component" value="Chromosome"/>
</dbReference>
<dbReference type="GO" id="GO:0005737">
    <property type="term" value="C:cytoplasm"/>
    <property type="evidence" value="ECO:0007669"/>
    <property type="project" value="UniProtKB-ARBA"/>
</dbReference>
<dbReference type="GO" id="GO:1990904">
    <property type="term" value="C:ribonucleoprotein complex"/>
    <property type="evidence" value="ECO:0007669"/>
    <property type="project" value="UniProtKB-KW"/>
</dbReference>
<dbReference type="GO" id="GO:0005840">
    <property type="term" value="C:ribosome"/>
    <property type="evidence" value="ECO:0007669"/>
    <property type="project" value="UniProtKB-KW"/>
</dbReference>
<dbReference type="GO" id="GO:0008097">
    <property type="term" value="F:5S rRNA binding"/>
    <property type="evidence" value="ECO:0007669"/>
    <property type="project" value="TreeGrafter"/>
</dbReference>
<dbReference type="GO" id="GO:0003735">
    <property type="term" value="F:structural constituent of ribosome"/>
    <property type="evidence" value="ECO:0007669"/>
    <property type="project" value="InterPro"/>
</dbReference>
<dbReference type="GO" id="GO:0006412">
    <property type="term" value="P:translation"/>
    <property type="evidence" value="ECO:0007669"/>
    <property type="project" value="UniProtKB-UniRule"/>
</dbReference>
<dbReference type="CDD" id="cd00432">
    <property type="entry name" value="Ribosomal_L18_L5e"/>
    <property type="match status" value="1"/>
</dbReference>
<dbReference type="FunFam" id="3.30.420.100:FF:000001">
    <property type="entry name" value="50S ribosomal protein L18"/>
    <property type="match status" value="1"/>
</dbReference>
<dbReference type="Gene3D" id="3.30.420.100">
    <property type="match status" value="1"/>
</dbReference>
<dbReference type="HAMAP" id="MF_01337_B">
    <property type="entry name" value="Ribosomal_uL18_B"/>
    <property type="match status" value="1"/>
</dbReference>
<dbReference type="InterPro" id="IPR004389">
    <property type="entry name" value="Ribosomal_uL18_bac-type"/>
</dbReference>
<dbReference type="InterPro" id="IPR005484">
    <property type="entry name" value="Ribosomal_uL18_bac/euk"/>
</dbReference>
<dbReference type="NCBIfam" id="TIGR00060">
    <property type="entry name" value="L18_bact"/>
    <property type="match status" value="1"/>
</dbReference>
<dbReference type="PANTHER" id="PTHR12899">
    <property type="entry name" value="39S RIBOSOMAL PROTEIN L18, MITOCHONDRIAL"/>
    <property type="match status" value="1"/>
</dbReference>
<dbReference type="PANTHER" id="PTHR12899:SF3">
    <property type="entry name" value="LARGE RIBOSOMAL SUBUNIT PROTEIN UL18M"/>
    <property type="match status" value="1"/>
</dbReference>
<dbReference type="Pfam" id="PF00861">
    <property type="entry name" value="Ribosomal_L18p"/>
    <property type="match status" value="1"/>
</dbReference>
<dbReference type="SUPFAM" id="SSF53137">
    <property type="entry name" value="Translational machinery components"/>
    <property type="match status" value="1"/>
</dbReference>
<feature type="chain" id="PRO_1000086648" description="Large ribosomal subunit protein uL18">
    <location>
        <begin position="1"/>
        <end position="116"/>
    </location>
</feature>
<proteinExistence type="inferred from homology"/>
<name>RL18_ACHLI</name>
<keyword id="KW-1185">Reference proteome</keyword>
<keyword id="KW-0687">Ribonucleoprotein</keyword>
<keyword id="KW-0689">Ribosomal protein</keyword>
<keyword id="KW-0694">RNA-binding</keyword>
<keyword id="KW-0699">rRNA-binding</keyword>
<protein>
    <recommendedName>
        <fullName evidence="1">Large ribosomal subunit protein uL18</fullName>
    </recommendedName>
    <alternativeName>
        <fullName evidence="2">50S ribosomal protein L18</fullName>
    </alternativeName>
</protein>
<evidence type="ECO:0000255" key="1">
    <source>
        <dbReference type="HAMAP-Rule" id="MF_01337"/>
    </source>
</evidence>
<evidence type="ECO:0000305" key="2"/>
<gene>
    <name evidence="1" type="primary">rplR</name>
    <name type="ordered locus">ACL_0103</name>
</gene>
<reference key="1">
    <citation type="journal article" date="2011" name="J. Bacteriol.">
        <title>Complete genome and proteome of Acholeplasma laidlawii.</title>
        <authorList>
            <person name="Lazarev V.N."/>
            <person name="Levitskii S.A."/>
            <person name="Basovskii Y.I."/>
            <person name="Chukin M.M."/>
            <person name="Akopian T.A."/>
            <person name="Vereshchagin V.V."/>
            <person name="Kostrjukova E.S."/>
            <person name="Kovaleva G.Y."/>
            <person name="Kazanov M.D."/>
            <person name="Malko D.B."/>
            <person name="Vitreschak A.G."/>
            <person name="Sernova N.V."/>
            <person name="Gelfand M.S."/>
            <person name="Demina I.A."/>
            <person name="Serebryakova M.V."/>
            <person name="Galyamina M.A."/>
            <person name="Vtyurin N.N."/>
            <person name="Rogov S.I."/>
            <person name="Alexeev D.G."/>
            <person name="Ladygina V.G."/>
            <person name="Govorun V.M."/>
        </authorList>
    </citation>
    <scope>NUCLEOTIDE SEQUENCE [LARGE SCALE GENOMIC DNA]</scope>
    <source>
        <strain>PG-8A</strain>
    </source>
</reference>
<comment type="function">
    <text evidence="1">This is one of the proteins that bind and probably mediate the attachment of the 5S RNA into the large ribosomal subunit, where it forms part of the central protuberance.</text>
</comment>
<comment type="subunit">
    <text evidence="1">Part of the 50S ribosomal subunit; part of the 5S rRNA/L5/L18/L25 subcomplex. Contacts the 5S and 23S rRNAs.</text>
</comment>
<comment type="similarity">
    <text evidence="1">Belongs to the universal ribosomal protein uL18 family.</text>
</comment>